<evidence type="ECO:0000255" key="1">
    <source>
        <dbReference type="HAMAP-Rule" id="MF_00105"/>
    </source>
</evidence>
<proteinExistence type="inferred from homology"/>
<gene>
    <name evidence="1" type="primary">greA</name>
    <name type="ordered locus">BAA_4627</name>
</gene>
<sequence length="158" mass="17438">MATEKTYPMTQEGKQKLENELEDLKTVKRKEVVERIKIARSFGDLSENSEYDAAKDEQAFVEGRITQLENMIRNAVIITDNGEESTVVTLGKTVTFKELPNGDEEAYTIVGSAEADPFEGRISNDSPIAKSLLGKQIGEKVAIQTPGGEMQVEIISVK</sequence>
<keyword id="KW-0175">Coiled coil</keyword>
<keyword id="KW-0238">DNA-binding</keyword>
<keyword id="KW-0804">Transcription</keyword>
<keyword id="KW-0805">Transcription regulation</keyword>
<feature type="chain" id="PRO_1000118946" description="Transcription elongation factor GreA">
    <location>
        <begin position="1"/>
        <end position="158"/>
    </location>
</feature>
<feature type="coiled-coil region" evidence="1">
    <location>
        <begin position="4"/>
        <end position="75"/>
    </location>
</feature>
<protein>
    <recommendedName>
        <fullName evidence="1">Transcription elongation factor GreA</fullName>
    </recommendedName>
    <alternativeName>
        <fullName evidence="1">Transcript cleavage factor GreA</fullName>
    </alternativeName>
</protein>
<comment type="function">
    <text evidence="1">Necessary for efficient RNA polymerase transcription elongation past template-encoded arresting sites. The arresting sites in DNA have the property of trapping a certain fraction of elongating RNA polymerases that pass through, resulting in locked ternary complexes. Cleavage of the nascent transcript by cleavage factors such as GreA or GreB allows the resumption of elongation from the new 3'terminus. GreA releases sequences of 2 to 3 nucleotides.</text>
</comment>
<comment type="similarity">
    <text evidence="1">Belongs to the GreA/GreB family.</text>
</comment>
<organism>
    <name type="scientific">Bacillus anthracis (strain A0248)</name>
    <dbReference type="NCBI Taxonomy" id="592021"/>
    <lineage>
        <taxon>Bacteria</taxon>
        <taxon>Bacillati</taxon>
        <taxon>Bacillota</taxon>
        <taxon>Bacilli</taxon>
        <taxon>Bacillales</taxon>
        <taxon>Bacillaceae</taxon>
        <taxon>Bacillus</taxon>
        <taxon>Bacillus cereus group</taxon>
    </lineage>
</organism>
<accession>C3P968</accession>
<name>GREA_BACAA</name>
<reference key="1">
    <citation type="submission" date="2009-04" db="EMBL/GenBank/DDBJ databases">
        <title>Genome sequence of Bacillus anthracis A0248.</title>
        <authorList>
            <person name="Dodson R.J."/>
            <person name="Munk A.C."/>
            <person name="Bruce D."/>
            <person name="Detter C."/>
            <person name="Tapia R."/>
            <person name="Sutton G."/>
            <person name="Sims D."/>
            <person name="Brettin T."/>
        </authorList>
    </citation>
    <scope>NUCLEOTIDE SEQUENCE [LARGE SCALE GENOMIC DNA]</scope>
    <source>
        <strain>A0248</strain>
    </source>
</reference>
<dbReference type="EMBL" id="CP001598">
    <property type="protein sequence ID" value="ACQ48944.1"/>
    <property type="molecule type" value="Genomic_DNA"/>
</dbReference>
<dbReference type="RefSeq" id="WP_000179966.1">
    <property type="nucleotide sequence ID" value="NC_012659.1"/>
</dbReference>
<dbReference type="SMR" id="C3P968"/>
<dbReference type="GeneID" id="93006722"/>
<dbReference type="KEGG" id="bai:BAA_4627"/>
<dbReference type="HOGENOM" id="CLU_101379_2_1_9"/>
<dbReference type="GO" id="GO:0003677">
    <property type="term" value="F:DNA binding"/>
    <property type="evidence" value="ECO:0007669"/>
    <property type="project" value="UniProtKB-UniRule"/>
</dbReference>
<dbReference type="GO" id="GO:0070063">
    <property type="term" value="F:RNA polymerase binding"/>
    <property type="evidence" value="ECO:0007669"/>
    <property type="project" value="InterPro"/>
</dbReference>
<dbReference type="GO" id="GO:0006354">
    <property type="term" value="P:DNA-templated transcription elongation"/>
    <property type="evidence" value="ECO:0007669"/>
    <property type="project" value="TreeGrafter"/>
</dbReference>
<dbReference type="GO" id="GO:0032784">
    <property type="term" value="P:regulation of DNA-templated transcription elongation"/>
    <property type="evidence" value="ECO:0007669"/>
    <property type="project" value="UniProtKB-UniRule"/>
</dbReference>
<dbReference type="FunFam" id="1.10.287.180:FF:000001">
    <property type="entry name" value="Transcription elongation factor GreA"/>
    <property type="match status" value="1"/>
</dbReference>
<dbReference type="FunFam" id="3.10.50.30:FF:000001">
    <property type="entry name" value="Transcription elongation factor GreA"/>
    <property type="match status" value="1"/>
</dbReference>
<dbReference type="Gene3D" id="3.10.50.30">
    <property type="entry name" value="Transcription elongation factor, GreA/GreB, C-terminal domain"/>
    <property type="match status" value="1"/>
</dbReference>
<dbReference type="Gene3D" id="1.10.287.180">
    <property type="entry name" value="Transcription elongation factor, GreA/GreB, N-terminal domain"/>
    <property type="match status" value="1"/>
</dbReference>
<dbReference type="HAMAP" id="MF_00105">
    <property type="entry name" value="GreA_GreB"/>
    <property type="match status" value="1"/>
</dbReference>
<dbReference type="InterPro" id="IPR036953">
    <property type="entry name" value="GreA/GreB_C_sf"/>
</dbReference>
<dbReference type="InterPro" id="IPR018151">
    <property type="entry name" value="TF_GreA/GreB_CS"/>
</dbReference>
<dbReference type="InterPro" id="IPR006359">
    <property type="entry name" value="Tscrpt_elong_fac_GreA"/>
</dbReference>
<dbReference type="InterPro" id="IPR028624">
    <property type="entry name" value="Tscrpt_elong_fac_GreA/B"/>
</dbReference>
<dbReference type="InterPro" id="IPR001437">
    <property type="entry name" value="Tscrpt_elong_fac_GreA/B_C"/>
</dbReference>
<dbReference type="InterPro" id="IPR023459">
    <property type="entry name" value="Tscrpt_elong_fac_GreA/B_fam"/>
</dbReference>
<dbReference type="InterPro" id="IPR022691">
    <property type="entry name" value="Tscrpt_elong_fac_GreA/B_N"/>
</dbReference>
<dbReference type="InterPro" id="IPR036805">
    <property type="entry name" value="Tscrpt_elong_fac_GreA/B_N_sf"/>
</dbReference>
<dbReference type="NCBIfam" id="TIGR01462">
    <property type="entry name" value="greA"/>
    <property type="match status" value="1"/>
</dbReference>
<dbReference type="NCBIfam" id="NF001261">
    <property type="entry name" value="PRK00226.1-2"/>
    <property type="match status" value="1"/>
</dbReference>
<dbReference type="NCBIfam" id="NF001263">
    <property type="entry name" value="PRK00226.1-4"/>
    <property type="match status" value="1"/>
</dbReference>
<dbReference type="PANTHER" id="PTHR30437">
    <property type="entry name" value="TRANSCRIPTION ELONGATION FACTOR GREA"/>
    <property type="match status" value="1"/>
</dbReference>
<dbReference type="PANTHER" id="PTHR30437:SF4">
    <property type="entry name" value="TRANSCRIPTION ELONGATION FACTOR GREA"/>
    <property type="match status" value="1"/>
</dbReference>
<dbReference type="Pfam" id="PF01272">
    <property type="entry name" value="GreA_GreB"/>
    <property type="match status" value="1"/>
</dbReference>
<dbReference type="Pfam" id="PF03449">
    <property type="entry name" value="GreA_GreB_N"/>
    <property type="match status" value="1"/>
</dbReference>
<dbReference type="PIRSF" id="PIRSF006092">
    <property type="entry name" value="GreA_GreB"/>
    <property type="match status" value="1"/>
</dbReference>
<dbReference type="SUPFAM" id="SSF54534">
    <property type="entry name" value="FKBP-like"/>
    <property type="match status" value="1"/>
</dbReference>
<dbReference type="SUPFAM" id="SSF46557">
    <property type="entry name" value="GreA transcript cleavage protein, N-terminal domain"/>
    <property type="match status" value="1"/>
</dbReference>
<dbReference type="PROSITE" id="PS00829">
    <property type="entry name" value="GREAB_1"/>
    <property type="match status" value="1"/>
</dbReference>
<dbReference type="PROSITE" id="PS00830">
    <property type="entry name" value="GREAB_2"/>
    <property type="match status" value="1"/>
</dbReference>